<proteinExistence type="inferred from homology"/>
<keyword id="KW-0021">Allosteric enzyme</keyword>
<keyword id="KW-0328">Glycosyltransferase</keyword>
<keyword id="KW-0342">GTP-binding</keyword>
<keyword id="KW-0460">Magnesium</keyword>
<keyword id="KW-0547">Nucleotide-binding</keyword>
<keyword id="KW-0808">Transferase</keyword>
<evidence type="ECO:0000255" key="1">
    <source>
        <dbReference type="HAMAP-Rule" id="MF_01218"/>
    </source>
</evidence>
<comment type="function">
    <text evidence="1">Catalyzes the conversion of uracil and 5-phospho-alpha-D-ribose 1-diphosphate (PRPP) to UMP and diphosphate.</text>
</comment>
<comment type="catalytic activity">
    <reaction evidence="1">
        <text>UMP + diphosphate = 5-phospho-alpha-D-ribose 1-diphosphate + uracil</text>
        <dbReference type="Rhea" id="RHEA:13017"/>
        <dbReference type="ChEBI" id="CHEBI:17568"/>
        <dbReference type="ChEBI" id="CHEBI:33019"/>
        <dbReference type="ChEBI" id="CHEBI:57865"/>
        <dbReference type="ChEBI" id="CHEBI:58017"/>
        <dbReference type="EC" id="2.4.2.9"/>
    </reaction>
</comment>
<comment type="cofactor">
    <cofactor evidence="1">
        <name>Mg(2+)</name>
        <dbReference type="ChEBI" id="CHEBI:18420"/>
    </cofactor>
    <text evidence="1">Binds 1 Mg(2+) ion per subunit. The magnesium is bound as Mg-PRPP.</text>
</comment>
<comment type="activity regulation">
    <text evidence="1">Allosterically activated by GTP.</text>
</comment>
<comment type="pathway">
    <text evidence="1">Pyrimidine metabolism; UMP biosynthesis via salvage pathway; UMP from uracil: step 1/1.</text>
</comment>
<comment type="similarity">
    <text evidence="1">Belongs to the UPRTase family.</text>
</comment>
<organism>
    <name type="scientific">Sinorhizobium medicae (strain WSM419)</name>
    <name type="common">Ensifer medicae</name>
    <dbReference type="NCBI Taxonomy" id="366394"/>
    <lineage>
        <taxon>Bacteria</taxon>
        <taxon>Pseudomonadati</taxon>
        <taxon>Pseudomonadota</taxon>
        <taxon>Alphaproteobacteria</taxon>
        <taxon>Hyphomicrobiales</taxon>
        <taxon>Rhizobiaceae</taxon>
        <taxon>Sinorhizobium/Ensifer group</taxon>
        <taxon>Sinorhizobium</taxon>
    </lineage>
</organism>
<dbReference type="EC" id="2.4.2.9" evidence="1"/>
<dbReference type="EMBL" id="CP000738">
    <property type="protein sequence ID" value="ABR62164.1"/>
    <property type="molecule type" value="Genomic_DNA"/>
</dbReference>
<dbReference type="RefSeq" id="WP_012067545.1">
    <property type="nucleotide sequence ID" value="NC_009636.1"/>
</dbReference>
<dbReference type="RefSeq" id="YP_001328999.1">
    <property type="nucleotide sequence ID" value="NC_009636.1"/>
</dbReference>
<dbReference type="SMR" id="A6UET4"/>
<dbReference type="STRING" id="366394.Smed_3343"/>
<dbReference type="GeneID" id="61610894"/>
<dbReference type="KEGG" id="smd:Smed_3343"/>
<dbReference type="PATRIC" id="fig|366394.8.peg.6589"/>
<dbReference type="eggNOG" id="COG0035">
    <property type="taxonomic scope" value="Bacteria"/>
</dbReference>
<dbReference type="HOGENOM" id="CLU_067096_2_2_5"/>
<dbReference type="OrthoDB" id="9781675at2"/>
<dbReference type="UniPathway" id="UPA00574">
    <property type="reaction ID" value="UER00636"/>
</dbReference>
<dbReference type="Proteomes" id="UP000001108">
    <property type="component" value="Chromosome"/>
</dbReference>
<dbReference type="GO" id="GO:0005525">
    <property type="term" value="F:GTP binding"/>
    <property type="evidence" value="ECO:0007669"/>
    <property type="project" value="UniProtKB-KW"/>
</dbReference>
<dbReference type="GO" id="GO:0000287">
    <property type="term" value="F:magnesium ion binding"/>
    <property type="evidence" value="ECO:0007669"/>
    <property type="project" value="UniProtKB-UniRule"/>
</dbReference>
<dbReference type="GO" id="GO:0004845">
    <property type="term" value="F:uracil phosphoribosyltransferase activity"/>
    <property type="evidence" value="ECO:0007669"/>
    <property type="project" value="UniProtKB-UniRule"/>
</dbReference>
<dbReference type="GO" id="GO:0044206">
    <property type="term" value="P:UMP salvage"/>
    <property type="evidence" value="ECO:0007669"/>
    <property type="project" value="UniProtKB-UniRule"/>
</dbReference>
<dbReference type="GO" id="GO:0006223">
    <property type="term" value="P:uracil salvage"/>
    <property type="evidence" value="ECO:0007669"/>
    <property type="project" value="InterPro"/>
</dbReference>
<dbReference type="CDD" id="cd06223">
    <property type="entry name" value="PRTases_typeI"/>
    <property type="match status" value="1"/>
</dbReference>
<dbReference type="FunFam" id="3.40.50.2020:FF:000003">
    <property type="entry name" value="Uracil phosphoribosyltransferase"/>
    <property type="match status" value="1"/>
</dbReference>
<dbReference type="Gene3D" id="3.40.50.2020">
    <property type="match status" value="1"/>
</dbReference>
<dbReference type="HAMAP" id="MF_01218_B">
    <property type="entry name" value="Upp_B"/>
    <property type="match status" value="1"/>
</dbReference>
<dbReference type="InterPro" id="IPR000836">
    <property type="entry name" value="PRibTrfase_dom"/>
</dbReference>
<dbReference type="InterPro" id="IPR029057">
    <property type="entry name" value="PRTase-like"/>
</dbReference>
<dbReference type="InterPro" id="IPR034332">
    <property type="entry name" value="Upp_B"/>
</dbReference>
<dbReference type="InterPro" id="IPR050054">
    <property type="entry name" value="UPRTase/APRTase"/>
</dbReference>
<dbReference type="InterPro" id="IPR005765">
    <property type="entry name" value="Ura_phspho_trans"/>
</dbReference>
<dbReference type="NCBIfam" id="NF001097">
    <property type="entry name" value="PRK00129.1"/>
    <property type="match status" value="1"/>
</dbReference>
<dbReference type="NCBIfam" id="TIGR01091">
    <property type="entry name" value="upp"/>
    <property type="match status" value="1"/>
</dbReference>
<dbReference type="PANTHER" id="PTHR32315">
    <property type="entry name" value="ADENINE PHOSPHORIBOSYLTRANSFERASE"/>
    <property type="match status" value="1"/>
</dbReference>
<dbReference type="PANTHER" id="PTHR32315:SF4">
    <property type="entry name" value="URACIL PHOSPHORIBOSYLTRANSFERASE, CHLOROPLASTIC"/>
    <property type="match status" value="1"/>
</dbReference>
<dbReference type="Pfam" id="PF14681">
    <property type="entry name" value="UPRTase"/>
    <property type="match status" value="1"/>
</dbReference>
<dbReference type="SUPFAM" id="SSF53271">
    <property type="entry name" value="PRTase-like"/>
    <property type="match status" value="1"/>
</dbReference>
<gene>
    <name evidence="1" type="primary">upp</name>
    <name type="ordered locus">Smed_3343</name>
</gene>
<reference key="1">
    <citation type="submission" date="2007-06" db="EMBL/GenBank/DDBJ databases">
        <title>Complete sequence of Sinorhizobium medicae WSM419 chromosome.</title>
        <authorList>
            <consortium name="US DOE Joint Genome Institute"/>
            <person name="Copeland A."/>
            <person name="Lucas S."/>
            <person name="Lapidus A."/>
            <person name="Barry K."/>
            <person name="Glavina del Rio T."/>
            <person name="Dalin E."/>
            <person name="Tice H."/>
            <person name="Pitluck S."/>
            <person name="Chain P."/>
            <person name="Malfatti S."/>
            <person name="Shin M."/>
            <person name="Vergez L."/>
            <person name="Schmutz J."/>
            <person name="Larimer F."/>
            <person name="Land M."/>
            <person name="Hauser L."/>
            <person name="Kyrpides N."/>
            <person name="Mikhailova N."/>
            <person name="Reeve W.G."/>
            <person name="Richardson P."/>
        </authorList>
    </citation>
    <scope>NUCLEOTIDE SEQUENCE [LARGE SCALE GENOMIC DNA]</scope>
    <source>
        <strain>WSM419</strain>
    </source>
</reference>
<protein>
    <recommendedName>
        <fullName evidence="1">Uracil phosphoribosyltransferase</fullName>
        <ecNumber evidence="1">2.4.2.9</ecNumber>
    </recommendedName>
    <alternativeName>
        <fullName evidence="1">UMP pyrophosphorylase</fullName>
    </alternativeName>
    <alternativeName>
        <fullName evidence="1">UPRTase</fullName>
    </alternativeName>
</protein>
<accession>A6UET4</accession>
<name>UPP_SINMW</name>
<feature type="chain" id="PRO_1000053788" description="Uracil phosphoribosyltransferase">
    <location>
        <begin position="1"/>
        <end position="209"/>
    </location>
</feature>
<feature type="binding site" evidence="1">
    <location>
        <position position="79"/>
    </location>
    <ligand>
        <name>5-phospho-alpha-D-ribose 1-diphosphate</name>
        <dbReference type="ChEBI" id="CHEBI:58017"/>
    </ligand>
</feature>
<feature type="binding site" evidence="1">
    <location>
        <position position="104"/>
    </location>
    <ligand>
        <name>5-phospho-alpha-D-ribose 1-diphosphate</name>
        <dbReference type="ChEBI" id="CHEBI:58017"/>
    </ligand>
</feature>
<feature type="binding site" evidence="1">
    <location>
        <begin position="131"/>
        <end position="139"/>
    </location>
    <ligand>
        <name>5-phospho-alpha-D-ribose 1-diphosphate</name>
        <dbReference type="ChEBI" id="CHEBI:58017"/>
    </ligand>
</feature>
<feature type="binding site" evidence="1">
    <location>
        <position position="194"/>
    </location>
    <ligand>
        <name>uracil</name>
        <dbReference type="ChEBI" id="CHEBI:17568"/>
    </ligand>
</feature>
<feature type="binding site" evidence="1">
    <location>
        <begin position="199"/>
        <end position="201"/>
    </location>
    <ligand>
        <name>uracil</name>
        <dbReference type="ChEBI" id="CHEBI:17568"/>
    </ligand>
</feature>
<feature type="binding site" evidence="1">
    <location>
        <position position="200"/>
    </location>
    <ligand>
        <name>5-phospho-alpha-D-ribose 1-diphosphate</name>
        <dbReference type="ChEBI" id="CHEBI:58017"/>
    </ligand>
</feature>
<sequence>MDGVTVIGHPLVQHKLTIMRKKETSTAGFRRLLKEISTLLCYEVTRDLELTTERIETPLEETDAPVLEGKKLVFASILRAGNGLLEGMLELVPSARVAHIGVYRDHETLQAVEYFFKAPDNINERLVIVVDPMLATGNSSIAAVEKLKERGARNIRFLCLLAAPEGIRNFQGVHPDVPIFTASIDSHLNELGYIVPGLGDAGDRMYGTK</sequence>